<proteinExistence type="inferred from homology"/>
<accession>Q8CPT8</accession>
<organism>
    <name type="scientific">Staphylococcus epidermidis (strain ATCC 12228 / FDA PCI 1200)</name>
    <dbReference type="NCBI Taxonomy" id="176280"/>
    <lineage>
        <taxon>Bacteria</taxon>
        <taxon>Bacillati</taxon>
        <taxon>Bacillota</taxon>
        <taxon>Bacilli</taxon>
        <taxon>Bacillales</taxon>
        <taxon>Staphylococcaceae</taxon>
        <taxon>Staphylococcus</taxon>
    </lineage>
</organism>
<sequence length="301" mass="33221">MKFLSFKHNDRTSYGVKVKREDAVWDLPMVFAEFGDKDFNPKTLIAGLQQNQTLDFQEQVRKAVVAAEESGRDEEFKLLFTDIDFLPPVTPPNNVIAFGRNYEDHASELNHEVDSLYVFTKAASSLTGDEATIPNHKDITEQLDYEGELGIVIGKSGEKIPRGLALDYIYGYTIINDITDRTAQSSHDQAFLSKSLTGACPMGPYIVTKDELPAPENVNIVTKVNNEIRQDGNTGEMILKIDELIEKISKYVALHPGDIIATGTPAGVGAGLQPPQFLQPGDEVKVTIDNIGTLTTYISKN</sequence>
<name>Y665_STAES</name>
<reference key="1">
    <citation type="journal article" date="2003" name="Mol. Microbiol.">
        <title>Genome-based analysis of virulence genes in a non-biofilm-forming Staphylococcus epidermidis strain (ATCC 12228).</title>
        <authorList>
            <person name="Zhang Y.-Q."/>
            <person name="Ren S.-X."/>
            <person name="Li H.-L."/>
            <person name="Wang Y.-X."/>
            <person name="Fu G."/>
            <person name="Yang J."/>
            <person name="Qin Z.-Q."/>
            <person name="Miao Y.-G."/>
            <person name="Wang W.-Y."/>
            <person name="Chen R.-S."/>
            <person name="Shen Y."/>
            <person name="Chen Z."/>
            <person name="Yuan Z.-H."/>
            <person name="Zhao G.-P."/>
            <person name="Qu D."/>
            <person name="Danchin A."/>
            <person name="Wen Y.-M."/>
        </authorList>
    </citation>
    <scope>NUCLEOTIDE SEQUENCE [LARGE SCALE GENOMIC DNA]</scope>
    <source>
        <strain>ATCC 12228 / FDA PCI 1200</strain>
    </source>
</reference>
<keyword id="KW-0479">Metal-binding</keyword>
<evidence type="ECO:0000250" key="1"/>
<evidence type="ECO:0000305" key="2"/>
<feature type="chain" id="PRO_0000303226" description="Uncharacterized protein SE_0665">
    <location>
        <begin position="1"/>
        <end position="301"/>
    </location>
</feature>
<feature type="binding site" evidence="1">
    <location>
        <position position="146"/>
    </location>
    <ligand>
        <name>a divalent metal cation</name>
        <dbReference type="ChEBI" id="CHEBI:60240"/>
    </ligand>
</feature>
<feature type="binding site" evidence="1">
    <location>
        <position position="148"/>
    </location>
    <ligand>
        <name>a divalent metal cation</name>
        <dbReference type="ChEBI" id="CHEBI:60240"/>
    </ligand>
</feature>
<feature type="binding site" evidence="1">
    <location>
        <position position="177"/>
    </location>
    <ligand>
        <name>a divalent metal cation</name>
        <dbReference type="ChEBI" id="CHEBI:60240"/>
    </ligand>
</feature>
<protein>
    <recommendedName>
        <fullName>Uncharacterized protein SE_0665</fullName>
    </recommendedName>
</protein>
<comment type="similarity">
    <text evidence="2">Belongs to the FAH family.</text>
</comment>
<dbReference type="EMBL" id="AE015929">
    <property type="protein sequence ID" value="AAO04262.1"/>
    <property type="molecule type" value="Genomic_DNA"/>
</dbReference>
<dbReference type="RefSeq" id="NP_764220.1">
    <property type="nucleotide sequence ID" value="NC_004461.1"/>
</dbReference>
<dbReference type="RefSeq" id="WP_001831933.1">
    <property type="nucleotide sequence ID" value="NZ_WBME01000043.1"/>
</dbReference>
<dbReference type="SMR" id="Q8CPT8"/>
<dbReference type="KEGG" id="sep:SE_0665"/>
<dbReference type="PATRIC" id="fig|176280.10.peg.638"/>
<dbReference type="eggNOG" id="COG0179">
    <property type="taxonomic scope" value="Bacteria"/>
</dbReference>
<dbReference type="HOGENOM" id="CLU_028458_3_0_9"/>
<dbReference type="OrthoDB" id="9805307at2"/>
<dbReference type="Proteomes" id="UP000001411">
    <property type="component" value="Chromosome"/>
</dbReference>
<dbReference type="GO" id="GO:0018773">
    <property type="term" value="F:acetylpyruvate hydrolase activity"/>
    <property type="evidence" value="ECO:0007669"/>
    <property type="project" value="TreeGrafter"/>
</dbReference>
<dbReference type="GO" id="GO:0046872">
    <property type="term" value="F:metal ion binding"/>
    <property type="evidence" value="ECO:0007669"/>
    <property type="project" value="UniProtKB-KW"/>
</dbReference>
<dbReference type="FunFam" id="3.90.850.10:FF:000010">
    <property type="entry name" value="FAA hydrolase family protein"/>
    <property type="match status" value="1"/>
</dbReference>
<dbReference type="Gene3D" id="3.90.850.10">
    <property type="entry name" value="Fumarylacetoacetase-like, C-terminal domain"/>
    <property type="match status" value="1"/>
</dbReference>
<dbReference type="InterPro" id="IPR011234">
    <property type="entry name" value="Fumarylacetoacetase-like_C"/>
</dbReference>
<dbReference type="InterPro" id="IPR036663">
    <property type="entry name" value="Fumarylacetoacetase_C_sf"/>
</dbReference>
<dbReference type="PANTHER" id="PTHR11820">
    <property type="entry name" value="ACYLPYRUVASE"/>
    <property type="match status" value="1"/>
</dbReference>
<dbReference type="PANTHER" id="PTHR11820:SF7">
    <property type="entry name" value="ACYLPYRUVASE FAHD1, MITOCHONDRIAL"/>
    <property type="match status" value="1"/>
</dbReference>
<dbReference type="Pfam" id="PF01557">
    <property type="entry name" value="FAA_hydrolase"/>
    <property type="match status" value="1"/>
</dbReference>
<dbReference type="SUPFAM" id="SSF56529">
    <property type="entry name" value="FAH"/>
    <property type="match status" value="1"/>
</dbReference>
<gene>
    <name type="ordered locus">SE_0665</name>
</gene>